<gene>
    <name type="primary">gag</name>
</gene>
<dbReference type="EMBL" id="K02012">
    <property type="protein sequence ID" value="AAA44652.1"/>
    <property type="molecule type" value="Genomic_RNA"/>
</dbReference>
<dbReference type="SMR" id="P04593"/>
<dbReference type="PRO" id="PR:P04593"/>
<dbReference type="GO" id="GO:0042025">
    <property type="term" value="C:host cell nucleus"/>
    <property type="evidence" value="ECO:0007669"/>
    <property type="project" value="UniProtKB-SubCell"/>
</dbReference>
<dbReference type="GO" id="GO:0020002">
    <property type="term" value="C:host cell plasma membrane"/>
    <property type="evidence" value="ECO:0007669"/>
    <property type="project" value="UniProtKB-SubCell"/>
</dbReference>
<dbReference type="GO" id="GO:0072494">
    <property type="term" value="C:host multivesicular body"/>
    <property type="evidence" value="ECO:0007669"/>
    <property type="project" value="UniProtKB-SubCell"/>
</dbReference>
<dbReference type="GO" id="GO:0016020">
    <property type="term" value="C:membrane"/>
    <property type="evidence" value="ECO:0007669"/>
    <property type="project" value="UniProtKB-KW"/>
</dbReference>
<dbReference type="GO" id="GO:0019013">
    <property type="term" value="C:viral nucleocapsid"/>
    <property type="evidence" value="ECO:0007669"/>
    <property type="project" value="UniProtKB-KW"/>
</dbReference>
<dbReference type="GO" id="GO:0055036">
    <property type="term" value="C:virion membrane"/>
    <property type="evidence" value="ECO:0007669"/>
    <property type="project" value="UniProtKB-SubCell"/>
</dbReference>
<dbReference type="GO" id="GO:0003723">
    <property type="term" value="F:RNA binding"/>
    <property type="evidence" value="ECO:0007669"/>
    <property type="project" value="UniProtKB-KW"/>
</dbReference>
<dbReference type="GO" id="GO:0005198">
    <property type="term" value="F:structural molecule activity"/>
    <property type="evidence" value="ECO:0007669"/>
    <property type="project" value="InterPro"/>
</dbReference>
<dbReference type="GO" id="GO:0008270">
    <property type="term" value="F:zinc ion binding"/>
    <property type="evidence" value="ECO:0007669"/>
    <property type="project" value="UniProtKB-KW"/>
</dbReference>
<dbReference type="GO" id="GO:0039702">
    <property type="term" value="P:viral budding via host ESCRT complex"/>
    <property type="evidence" value="ECO:0007669"/>
    <property type="project" value="UniProtKB-KW"/>
</dbReference>
<dbReference type="GO" id="GO:0075523">
    <property type="term" value="P:viral translational frameshifting"/>
    <property type="evidence" value="ECO:0007669"/>
    <property type="project" value="UniProtKB-KW"/>
</dbReference>
<dbReference type="FunFam" id="1.10.1200.30:FF:000001">
    <property type="entry name" value="Gag polyprotein"/>
    <property type="match status" value="1"/>
</dbReference>
<dbReference type="FunFam" id="1.10.150.90:FF:000001">
    <property type="entry name" value="Gag polyprotein"/>
    <property type="match status" value="1"/>
</dbReference>
<dbReference type="FunFam" id="1.10.375.10:FF:000001">
    <property type="entry name" value="Gag polyprotein"/>
    <property type="match status" value="1"/>
</dbReference>
<dbReference type="FunFam" id="1.20.5.760:FF:000001">
    <property type="entry name" value="Gag polyprotein"/>
    <property type="match status" value="1"/>
</dbReference>
<dbReference type="FunFam" id="4.10.60.10:FF:000001">
    <property type="entry name" value="Gag polyprotein"/>
    <property type="match status" value="1"/>
</dbReference>
<dbReference type="Gene3D" id="1.10.1200.30">
    <property type="match status" value="1"/>
</dbReference>
<dbReference type="Gene3D" id="6.10.250.390">
    <property type="match status" value="1"/>
</dbReference>
<dbReference type="Gene3D" id="1.10.375.10">
    <property type="entry name" value="Human Immunodeficiency Virus Type 1 Capsid Protein"/>
    <property type="match status" value="1"/>
</dbReference>
<dbReference type="Gene3D" id="1.10.150.90">
    <property type="entry name" value="Immunodeficiency lentiviruses, gag gene matrix protein p17"/>
    <property type="match status" value="1"/>
</dbReference>
<dbReference type="Gene3D" id="1.20.5.760">
    <property type="entry name" value="Single helix bin"/>
    <property type="match status" value="1"/>
</dbReference>
<dbReference type="Gene3D" id="4.10.60.10">
    <property type="entry name" value="Zinc finger, CCHC-type"/>
    <property type="match status" value="1"/>
</dbReference>
<dbReference type="InterPro" id="IPR045345">
    <property type="entry name" value="Gag_p24_C"/>
</dbReference>
<dbReference type="InterPro" id="IPR014817">
    <property type="entry name" value="Gag_p6"/>
</dbReference>
<dbReference type="InterPro" id="IPR000071">
    <property type="entry name" value="Lentvrl_matrix_N"/>
</dbReference>
<dbReference type="InterPro" id="IPR012344">
    <property type="entry name" value="Matrix_HIV/RSV_N"/>
</dbReference>
<dbReference type="InterPro" id="IPR050195">
    <property type="entry name" value="Primate_lentivir_Gag_pol-like"/>
</dbReference>
<dbReference type="InterPro" id="IPR008916">
    <property type="entry name" value="Retrov_capsid_C"/>
</dbReference>
<dbReference type="InterPro" id="IPR008919">
    <property type="entry name" value="Retrov_capsid_N"/>
</dbReference>
<dbReference type="InterPro" id="IPR010999">
    <property type="entry name" value="Retrovr_matrix"/>
</dbReference>
<dbReference type="InterPro" id="IPR001878">
    <property type="entry name" value="Znf_CCHC"/>
</dbReference>
<dbReference type="InterPro" id="IPR036875">
    <property type="entry name" value="Znf_CCHC_sf"/>
</dbReference>
<dbReference type="PANTHER" id="PTHR40389:SF4">
    <property type="match status" value="1"/>
</dbReference>
<dbReference type="PANTHER" id="PTHR40389">
    <property type="entry name" value="ENDOGENOUS RETROVIRUS GROUP K MEMBER 24 GAG POLYPROTEIN-RELATED"/>
    <property type="match status" value="1"/>
</dbReference>
<dbReference type="Pfam" id="PF00540">
    <property type="entry name" value="Gag_p17"/>
    <property type="match status" value="1"/>
</dbReference>
<dbReference type="Pfam" id="PF00607">
    <property type="entry name" value="Gag_p24"/>
    <property type="match status" value="1"/>
</dbReference>
<dbReference type="Pfam" id="PF19317">
    <property type="entry name" value="Gag_p24_C"/>
    <property type="match status" value="1"/>
</dbReference>
<dbReference type="Pfam" id="PF08705">
    <property type="entry name" value="Gag_p6"/>
    <property type="match status" value="1"/>
</dbReference>
<dbReference type="Pfam" id="PF00098">
    <property type="entry name" value="zf-CCHC"/>
    <property type="match status" value="2"/>
</dbReference>
<dbReference type="PRINTS" id="PR00234">
    <property type="entry name" value="HIV1MATRIX"/>
</dbReference>
<dbReference type="SMART" id="SM00343">
    <property type="entry name" value="ZnF_C2HC"/>
    <property type="match status" value="2"/>
</dbReference>
<dbReference type="SUPFAM" id="SSF47836">
    <property type="entry name" value="Retroviral matrix proteins"/>
    <property type="match status" value="1"/>
</dbReference>
<dbReference type="SUPFAM" id="SSF47353">
    <property type="entry name" value="Retrovirus capsid dimerization domain-like"/>
    <property type="match status" value="1"/>
</dbReference>
<dbReference type="SUPFAM" id="SSF47943">
    <property type="entry name" value="Retrovirus capsid protein, N-terminal core domain"/>
    <property type="match status" value="1"/>
</dbReference>
<dbReference type="SUPFAM" id="SSF57756">
    <property type="entry name" value="Retrovirus zinc finger-like domains"/>
    <property type="match status" value="1"/>
</dbReference>
<dbReference type="PROSITE" id="PS50158">
    <property type="entry name" value="ZF_CCHC"/>
    <property type="match status" value="2"/>
</dbReference>
<proteinExistence type="inferred from homology"/>
<organismHost>
    <name type="scientific">Homo sapiens</name>
    <name type="common">Human</name>
    <dbReference type="NCBI Taxonomy" id="9606"/>
</organismHost>
<organism>
    <name type="scientific">Human immunodeficiency virus type 1 group M subtype B (isolate BH5)</name>
    <name type="common">HIV-1</name>
    <dbReference type="NCBI Taxonomy" id="11682"/>
    <lineage>
        <taxon>Viruses</taxon>
        <taxon>Riboviria</taxon>
        <taxon>Pararnavirae</taxon>
        <taxon>Artverviricota</taxon>
        <taxon>Revtraviricetes</taxon>
        <taxon>Ortervirales</taxon>
        <taxon>Retroviridae</taxon>
        <taxon>Orthoretrovirinae</taxon>
        <taxon>Lentivirus</taxon>
        <taxon>Human immunodeficiency virus type 1</taxon>
    </lineage>
</organism>
<comment type="function">
    <molecule>Gag polyprotein</molecule>
    <text evidence="5">Mediates, with Gag-Pol polyprotein, the essential events in virion assembly, including binding the plasma membrane, making the protein-protein interactions necessary to create spherical particles, recruiting the viral Env proteins, and packaging the genomic RNA via direct interactions with the RNA packaging sequence (Psi).</text>
</comment>
<comment type="function">
    <molecule>Matrix protein p17</molecule>
    <text evidence="1 6">Targets the polyprotein to the plasma membrane via a multipartite membrane-binding signal, that includes its myristoylated N-terminus (By similarity). Matrix protein is part of the pre-integration complex. Implicated in the release from host cell mediated by Vpu. Binds to RNA (By similarity).</text>
</comment>
<comment type="function">
    <molecule>Capsid protein p24</molecule>
    <text evidence="5 6">Forms the conical core that encapsulates the genomic RNA-nucleocapsid complex in the virion. Most core are conical, with only 7% tubular. The core is constituted by capsid protein hexamer subunits. The core is disassembled soon after virion entry (By similarity). The capsid promotes immune invasion by cloaking viral DNA from CGAS detection (By similarity). Host restriction factors such as TRIM5-alpha or TRIMCyp bind retroviral capsids and cause premature capsid disassembly, leading to blocks in reverse transcription. Capsid restriction by TRIM5 is one of the factors which restricts HIV-1 to the human species. Host PIN1 apparently facilitates the virion uncoating (By similarity). On the other hand, interactions with PDZD8 or CYPA stabilize the capsid (By similarity).</text>
</comment>
<comment type="function">
    <molecule>Nucleocapsid protein p7</molecule>
    <text evidence="5">Encapsulates and protects viral dimeric unspliced genomic RNA (gRNA). Binds these RNAs through its zinc fingers. Acts as a nucleic acid chaperone which is involved in rearangement of nucleic acid secondary structure during gRNA retrotranscription. Also facilitates template switch leading to recombination. As part of the polyprotein, participates in gRNA dimerization, packaging, tRNA incorporation and virion assembly.</text>
</comment>
<comment type="function">
    <molecule>p6-gag</molecule>
    <text evidence="6">Plays a role in budding of the assembled particle by interacting with the host class E VPS proteins TSG101 and PDCD6IP/AIP1.</text>
</comment>
<comment type="subunit">
    <molecule>Gag polyprotein</molecule>
    <text evidence="4 5">Homotrimer; further assembles as hexamers of trimers. Oligomerization possibly creates a central hole into which the cytoplasmic tail of the gp41 envelope protein may be inserted. Interacts with host TRIM22; this interaction seems to disrupt proper trafficking of Gag polyprotein and may interfere with budding. Interacts with host PDZD8. When ubiquitinated, interacts (via p6-gag domain) with host PACSIN2; this interaction allows PACSIN2 recruitment to viral assembly sites and its subsequent incorporation into virions. Interacts with MOV10 (By similarity).</text>
</comment>
<comment type="subunit">
    <molecule>Matrix protein p17</molecule>
    <text evidence="5 6">Homotrimer; further assembles as hexamers of trimers. Interacts with gp41 (via C-terminus). Interacts with host CALM1; this interaction induces a conformational change in the Matrix protein, triggering exposure of the myristate group. Interacts with host AP3D1; this interaction allows the polyprotein trafficking to multivesicular bodies during virus assembly. Part of the pre-integration complex (PIC) which is composed of viral genome, matrix protein, Vpr and integrase.</text>
</comment>
<comment type="subunit">
    <molecule>Capsid protein p24</molecule>
    <text evidence="5 6">Homodimer; the homodimer further multimerizes as homohexamers or homopentamers (By similarity). Interacts with host NUP98 (By similarity). Interacts with host PPIA/CYPA; this interaction stabilizes the capsid (By similarity). Interacts with host NUP153 (By similarity). Interacts with host PDZD8; this interaction stabilizes the capsid. Interacts with host TRIM5; this interaction destabilizes the capsid (By similarity). Interacts with host CPSF6 (By similarity). Interacts with host NONO; the interaction is weak (By similarity).</text>
</comment>
<comment type="subunit">
    <molecule>Nucleocapsid protein p7</molecule>
    <text evidence="6">Interacts with host NUP98.</text>
</comment>
<comment type="subunit">
    <molecule>p6-gag</molecule>
    <text evidence="3 6">Interacts with Vpr; this interaction allows Vpr incorporation into the virion. Interacts with host TSG101. p6-gag interacts with host PDCD6IP/AIP1.</text>
</comment>
<comment type="subcellular location">
    <molecule>Gag polyprotein</molecule>
    <subcellularLocation>
        <location evidence="6">Host cell membrane</location>
        <topology evidence="6">Lipid-anchor</topology>
    </subcellularLocation>
    <subcellularLocation>
        <location evidence="6">Host endosome</location>
        <location evidence="6">Host multivesicular body</location>
    </subcellularLocation>
    <text evidence="6">These locations are probably linked to virus assembly sites. The main location is the cell membrane, but under some circumstances, late endosomal compartments can serve as productive sites for virion assembly.</text>
</comment>
<comment type="subcellular location">
    <molecule>Matrix protein p17</molecule>
    <subcellularLocation>
        <location evidence="6">Virion membrane</location>
        <topology evidence="6">Lipid-anchor</topology>
    </subcellularLocation>
    <subcellularLocation>
        <location evidence="1">Host nucleus</location>
    </subcellularLocation>
    <subcellularLocation>
        <location evidence="1">Host cytoplasm</location>
    </subcellularLocation>
</comment>
<comment type="subcellular location">
    <molecule>Capsid protein p24</molecule>
    <subcellularLocation>
        <location evidence="6">Virion</location>
    </subcellularLocation>
</comment>
<comment type="subcellular location">
    <molecule>Nucleocapsid protein p7</molecule>
    <subcellularLocation>
        <location evidence="6">Virion</location>
    </subcellularLocation>
</comment>
<comment type="alternative products">
    <event type="ribosomal frameshifting"/>
    <isoform>
        <id>P04593-1</id>
        <name>Gag polyprotein</name>
        <sequence type="displayed"/>
    </isoform>
    <isoform>
        <id>P04587-1</id>
        <name>Gag-Pol polyprotein</name>
        <sequence type="external"/>
    </isoform>
    <text>Translation results in the formation of the Gag polyprotein most of the time. Ribosomal frameshifting at the gag-pol genes boundary occurs at low frequency and produces the Gag-Pol polyprotein. This strategy of translation probably allows the virus to modulate the quantity of each viral protein. Maintenance of a correct Gag to Gag-Pol ratio is essential for RNA dimerization and viral infectivity.</text>
</comment>
<comment type="domain">
    <text evidence="6">Late-budding domains (L domains) are short sequence motifs essential for viral particle budding. They recruit proteins of the host ESCRT machinery (Endosomal Sorting Complex Required for Transport) or ESCRT-associated proteins. p6-gag contains two L domains: a PTAP/PSAP motif, which interacts with the UEV domain of TSG101 and a LYPX(n)L motif which interacts with PDCD6IP/AIP1.</text>
</comment>
<comment type="PTM">
    <text evidence="6">Gag-Pol polyprotein: Specific enzymatic cleavages by the viral protease yield mature proteins.</text>
</comment>
<comment type="PTM">
    <molecule>Matrix protein p17</molecule>
    <text evidence="5">Tyrosine phosphorylated presumably in the virion by a host kinase. Phosphorylation is apparently not a major regulator of membrane association.</text>
</comment>
<comment type="PTM">
    <text evidence="6">Capsid protein p24 is phosphorylated possibly by host MAPK1; this phosphorylation is necessary for Pin1-mediated virion uncoating.</text>
</comment>
<comment type="PTM">
    <text evidence="2">Nucleocapsid protein p7 is methylated by host PRMT6, impairing its function by reducing RNA annealing and the initiation of reverse transcription.</text>
</comment>
<comment type="miscellaneous">
    <text>HIV-1 lineages are divided in three main groups, M (for Major), O (for Outlier), and N (for New, or Non-M, Non-O). The vast majority of strains found worldwide belong to the group M. Group O seems to be endemic to and largely confined to Cameroon and neighboring countries in West Central Africa, where these viruses represent a small minority of HIV-1 strains. The group N is represented by a limited number of isolates from Cameroonian persons. The group M is further subdivided in 9 clades or subtypes (A to D, F to H, J and K).</text>
</comment>
<comment type="miscellaneous">
    <molecule>Isoform Gag polyprotein</molecule>
    <text>Produced by conventional translation.</text>
</comment>
<comment type="similarity">
    <text evidence="10">Belongs to the primate lentivirus group gag polyprotein family.</text>
</comment>
<name>GAG_HV1B5</name>
<accession>P04593</accession>
<feature type="initiator methionine" description="Removed; by host" evidence="1">
    <location>
        <position position="1"/>
    </location>
</feature>
<feature type="chain" id="PRO_0000261210" description="Gag polyprotein">
    <location>
        <begin position="2"/>
        <end position="512"/>
    </location>
</feature>
<feature type="chain" id="PRO_0000038481" description="Matrix protein p17" evidence="1">
    <location>
        <begin position="2"/>
        <end position="132"/>
    </location>
</feature>
<feature type="chain" id="PRO_0000038482" description="Capsid protein p24" evidence="1">
    <location>
        <begin position="133"/>
        <end position="363"/>
    </location>
</feature>
<feature type="peptide" id="PRO_0000038483" description="Spacer peptide 1" evidence="1">
    <location>
        <begin position="364"/>
        <end position="377"/>
    </location>
</feature>
<feature type="chain" id="PRO_0000038484" description="Nucleocapsid protein p7" evidence="1">
    <location>
        <begin position="378"/>
        <end position="432"/>
    </location>
</feature>
<feature type="peptide" id="PRO_0000038485" description="Spacer peptide 2" evidence="1">
    <location>
        <begin position="433"/>
        <end position="448"/>
    </location>
</feature>
<feature type="chain" id="PRO_0000038486" description="p6-gag" evidence="1">
    <location>
        <begin position="449"/>
        <end position="512"/>
    </location>
</feature>
<feature type="zinc finger region" description="CCHC-type 1" evidence="8">
    <location>
        <begin position="390"/>
        <end position="407"/>
    </location>
</feature>
<feature type="zinc finger region" description="CCHC-type 2" evidence="8">
    <location>
        <begin position="411"/>
        <end position="428"/>
    </location>
</feature>
<feature type="region of interest" description="Interaction with Gp41" evidence="6">
    <location>
        <begin position="7"/>
        <end position="31"/>
    </location>
</feature>
<feature type="region of interest" description="Interaction with host CALM1" evidence="5">
    <location>
        <begin position="8"/>
        <end position="43"/>
    </location>
</feature>
<feature type="region of interest" description="Interaction with host AP3D1" evidence="7">
    <location>
        <begin position="12"/>
        <end position="19"/>
    </location>
</feature>
<feature type="region of interest" description="Interaction with membrane phosphatidylinositol 4,5-bisphosphate and RNA" evidence="6">
    <location>
        <begin position="14"/>
        <end position="33"/>
    </location>
</feature>
<feature type="region of interest" description="Interaction with membrane phosphatidylinositol 4,5-bisphosphate" evidence="6">
    <location>
        <begin position="73"/>
        <end position="77"/>
    </location>
</feature>
<feature type="region of interest" description="Disordered" evidence="9">
    <location>
        <begin position="106"/>
        <end position="128"/>
    </location>
</feature>
<feature type="region of interest" description="Interaction with host PPIA/CYPA and NUP153" evidence="6">
    <location>
        <begin position="189"/>
        <end position="227"/>
    </location>
</feature>
<feature type="region of interest" description="PPIA/CYPA-binding loop" evidence="5">
    <location>
        <begin position="217"/>
        <end position="225"/>
    </location>
</feature>
<feature type="region of interest" description="Dimerization/Multimerization of capsid protein p24" evidence="5">
    <location>
        <begin position="277"/>
        <end position="363"/>
    </location>
</feature>
<feature type="region of interest" description="Disordered" evidence="9">
    <location>
        <begin position="444"/>
        <end position="512"/>
    </location>
</feature>
<feature type="short sequence motif" description="Nuclear export signal" evidence="1">
    <location>
        <begin position="16"/>
        <end position="22"/>
    </location>
</feature>
<feature type="short sequence motif" description="Nuclear localization signal" evidence="1">
    <location>
        <begin position="26"/>
        <end position="32"/>
    </location>
</feature>
<feature type="short sequence motif" description="PTAP/PSAP motif 1" evidence="1">
    <location>
        <begin position="455"/>
        <end position="458"/>
    </location>
</feature>
<feature type="short sequence motif" description="PTAP/PSAP motif 2" evidence="1">
    <location>
        <begin position="467"/>
        <end position="470"/>
    </location>
</feature>
<feature type="short sequence motif" description="LYPX(n)L motif">
    <location>
        <begin position="495"/>
        <end position="504"/>
    </location>
</feature>
<feature type="site" description="Cleavage; by viral protease" evidence="1">
    <location>
        <begin position="132"/>
        <end position="133"/>
    </location>
</feature>
<feature type="site" description="Cleavage; by viral protease" evidence="1">
    <location>
        <begin position="363"/>
        <end position="364"/>
    </location>
</feature>
<feature type="site" description="Cleavage; by viral protease" evidence="1">
    <location>
        <begin position="377"/>
        <end position="378"/>
    </location>
</feature>
<feature type="site" description="Cleavage; by viral protease" evidence="1">
    <location>
        <begin position="432"/>
        <end position="433"/>
    </location>
</feature>
<feature type="site" description="Cleavage; by viral protease" evidence="1">
    <location>
        <begin position="448"/>
        <end position="449"/>
    </location>
</feature>
<feature type="modified residue" description="Phosphoserine; by host MAPK1" evidence="6">
    <location>
        <position position="148"/>
    </location>
</feature>
<feature type="modified residue" description="Asymmetric dimethylarginine; in Nucleocapsid protein p7; by host PRMT6" evidence="1">
    <location>
        <position position="387"/>
    </location>
</feature>
<feature type="modified residue" description="Asymmetric dimethylarginine; in Nucleocapsid protein p7; by host PRMT6" evidence="1">
    <location>
        <position position="409"/>
    </location>
</feature>
<feature type="lipid moiety-binding region" description="N-myristoyl glycine; by host" evidence="1">
    <location>
        <position position="2"/>
    </location>
</feature>
<evidence type="ECO:0000250" key="1"/>
<evidence type="ECO:0000250" key="2">
    <source>
        <dbReference type="UniProtKB" id="P03347"/>
    </source>
</evidence>
<evidence type="ECO:0000250" key="3">
    <source>
        <dbReference type="UniProtKB" id="P03348"/>
    </source>
</evidence>
<evidence type="ECO:0000250" key="4">
    <source>
        <dbReference type="UniProtKB" id="P03349"/>
    </source>
</evidence>
<evidence type="ECO:0000250" key="5">
    <source>
        <dbReference type="UniProtKB" id="P04591"/>
    </source>
</evidence>
<evidence type="ECO:0000250" key="6">
    <source>
        <dbReference type="UniProtKB" id="P12493"/>
    </source>
</evidence>
<evidence type="ECO:0000250" key="7">
    <source>
        <dbReference type="UniProtKB" id="P12497"/>
    </source>
</evidence>
<evidence type="ECO:0000255" key="8">
    <source>
        <dbReference type="PROSITE-ProRule" id="PRU00047"/>
    </source>
</evidence>
<evidence type="ECO:0000256" key="9">
    <source>
        <dbReference type="SAM" id="MobiDB-lite"/>
    </source>
</evidence>
<evidence type="ECO:0000305" key="10"/>
<reference key="1">
    <citation type="journal article" date="1985" name="Nature">
        <title>Complete nucleotide sequence of the AIDS virus, HTLV-III.</title>
        <authorList>
            <person name="Ratner L."/>
            <person name="Haseltine W.A."/>
            <person name="Patarca R."/>
            <person name="Livak K.J."/>
            <person name="Starcich B.R."/>
            <person name="Josephs S.F."/>
            <person name="Doran E.R."/>
            <person name="Rafalski J.A."/>
            <person name="Whitehorn E.A."/>
            <person name="Baumeister K."/>
            <person name="Ivanoff L."/>
            <person name="Petteway S.R. Jr."/>
            <person name="Pearson M.L."/>
            <person name="Lautenberger J.A."/>
            <person name="Papas T.S."/>
            <person name="Ghrayeb J."/>
            <person name="Chang N.T."/>
            <person name="Gallo R.C."/>
            <person name="Wong-Staal F."/>
        </authorList>
    </citation>
    <scope>NUCLEOTIDE SEQUENCE [GENOMIC RNA]</scope>
</reference>
<reference key="2">
    <citation type="journal article" date="2003" name="Biochim. Biophys. Acta">
        <title>Role of HIV-1 Gag domains in viral assembly.</title>
        <authorList>
            <person name="Scarlata S."/>
            <person name="Carter C."/>
        </authorList>
    </citation>
    <scope>REVIEW</scope>
</reference>
<sequence length="512" mass="57238">MGARASVLSGGELDRWEKIRLRPGGKKKYKLKHIVWASRELERFAVNPGLLETSEGCRQILGQLQPSLQTGSEELRSLYNTVATLYCVHQRIEIKDTKEALDKIEEEQNKSKKKAQQAAADTGHSSQVSQNYPIVQNIQGQMVHQAISPRTLNAWVKVVEEKAFSPEVIPMFSALSEGATPQDLNTMLNTVGGHQAAMQMLKETINEEAAEWDRVHPVHAGPIAPGQMREPRGSDIAGTTSTLQEQIGWMTNNPPIPVGEIYKRWIILGLNKIVRMYSPTSILDIRQGPKEPFRDYVDRFYKTLRAEQASQEVKNWMTETLLVQNANPDCKTILKALGPAATLEEMMTACQGVGGPGHKARVLAEAMSQVTNSTTIMMQRGNFRNQRKIVKCFNCGKEGHIARNCKAPRKKGCWKCGKEGHQMKDCTERQANFLGKIWPSYKGRPGNFLQSRPEPTAPPFLQSRPEPTAPPEESFRSGVETTTPPQKQEPIDKELYPLTSLRSLFGNDPSSQ</sequence>
<protein>
    <recommendedName>
        <fullName>Gag polyprotein</fullName>
    </recommendedName>
    <alternativeName>
        <fullName>Pr55Gag</fullName>
    </alternativeName>
    <component>
        <recommendedName>
            <fullName>Matrix protein p17</fullName>
            <shortName>MA</shortName>
        </recommendedName>
    </component>
    <component>
        <recommendedName>
            <fullName>Capsid protein p24</fullName>
            <shortName>CA</shortName>
        </recommendedName>
    </component>
    <component>
        <recommendedName>
            <fullName evidence="6">Spacer peptide 1</fullName>
            <shortName>SP1</shortName>
        </recommendedName>
        <alternativeName>
            <fullName>p2</fullName>
        </alternativeName>
    </component>
    <component>
        <recommendedName>
            <fullName>Nucleocapsid protein p7</fullName>
            <shortName>NC</shortName>
        </recommendedName>
    </component>
    <component>
        <recommendedName>
            <fullName evidence="6">Spacer peptide 2</fullName>
            <shortName>SP2</shortName>
        </recommendedName>
        <alternativeName>
            <fullName>p1</fullName>
        </alternativeName>
    </component>
    <component>
        <recommendedName>
            <fullName>p6-gag</fullName>
        </recommendedName>
    </component>
</protein>
<keyword id="KW-0014">AIDS</keyword>
<keyword id="KW-0167">Capsid protein</keyword>
<keyword id="KW-1032">Host cell membrane</keyword>
<keyword id="KW-1035">Host cytoplasm</keyword>
<keyword id="KW-1039">Host endosome</keyword>
<keyword id="KW-1043">Host membrane</keyword>
<keyword id="KW-1048">Host nucleus</keyword>
<keyword id="KW-0945">Host-virus interaction</keyword>
<keyword id="KW-0449">Lipoprotein</keyword>
<keyword id="KW-0472">Membrane</keyword>
<keyword id="KW-0479">Metal-binding</keyword>
<keyword id="KW-0488">Methylation</keyword>
<keyword id="KW-0519">Myristate</keyword>
<keyword id="KW-0597">Phosphoprotein</keyword>
<keyword id="KW-0677">Repeat</keyword>
<keyword id="KW-0688">Ribosomal frameshifting</keyword>
<keyword id="KW-0694">RNA-binding</keyword>
<keyword id="KW-1198">Viral budding</keyword>
<keyword id="KW-1187">Viral budding via the host ESCRT complexes</keyword>
<keyword id="KW-0543">Viral nucleoprotein</keyword>
<keyword id="KW-1188">Viral release from host cell</keyword>
<keyword id="KW-0946">Virion</keyword>
<keyword id="KW-0862">Zinc</keyword>
<keyword id="KW-0863">Zinc-finger</keyword>